<accession>B1MLV1</accession>
<evidence type="ECO:0000255" key="1">
    <source>
        <dbReference type="HAMAP-Rule" id="MF_00093"/>
    </source>
</evidence>
<organism>
    <name type="scientific">Mycobacteroides abscessus (strain ATCC 19977 / DSM 44196 / CCUG 20993 / CIP 104536 / JCM 13569 / NCTC 13031 / TMC 1543 / L948)</name>
    <name type="common">Mycobacterium abscessus</name>
    <dbReference type="NCBI Taxonomy" id="561007"/>
    <lineage>
        <taxon>Bacteria</taxon>
        <taxon>Bacillati</taxon>
        <taxon>Actinomycetota</taxon>
        <taxon>Actinomycetes</taxon>
        <taxon>Mycobacteriales</taxon>
        <taxon>Mycobacteriaceae</taxon>
        <taxon>Mycobacteroides</taxon>
        <taxon>Mycobacteroides abscessus</taxon>
    </lineage>
</organism>
<feature type="chain" id="PRO_1000093475" description="Peptide chain release factor 1">
    <location>
        <begin position="1"/>
        <end position="356"/>
    </location>
</feature>
<feature type="modified residue" description="N5-methylglutamine" evidence="1">
    <location>
        <position position="235"/>
    </location>
</feature>
<dbReference type="EMBL" id="CU458896">
    <property type="protein sequence ID" value="CAM61528.1"/>
    <property type="molecule type" value="Genomic_DNA"/>
</dbReference>
<dbReference type="RefSeq" id="WP_005059825.1">
    <property type="nucleotide sequence ID" value="NZ_MLCG01000002.1"/>
</dbReference>
<dbReference type="SMR" id="B1MLV1"/>
<dbReference type="GeneID" id="93378387"/>
<dbReference type="KEGG" id="mab:MAB_1442"/>
<dbReference type="Proteomes" id="UP000007137">
    <property type="component" value="Chromosome"/>
</dbReference>
<dbReference type="GO" id="GO:0005737">
    <property type="term" value="C:cytoplasm"/>
    <property type="evidence" value="ECO:0007669"/>
    <property type="project" value="UniProtKB-SubCell"/>
</dbReference>
<dbReference type="GO" id="GO:0016149">
    <property type="term" value="F:translation release factor activity, codon specific"/>
    <property type="evidence" value="ECO:0007669"/>
    <property type="project" value="UniProtKB-UniRule"/>
</dbReference>
<dbReference type="FunFam" id="3.30.160.20:FF:000004">
    <property type="entry name" value="Peptide chain release factor 1"/>
    <property type="match status" value="1"/>
</dbReference>
<dbReference type="Gene3D" id="3.30.160.20">
    <property type="match status" value="1"/>
</dbReference>
<dbReference type="Gene3D" id="3.30.70.1660">
    <property type="match status" value="1"/>
</dbReference>
<dbReference type="Gene3D" id="6.10.140.1950">
    <property type="match status" value="1"/>
</dbReference>
<dbReference type="HAMAP" id="MF_00093">
    <property type="entry name" value="Rel_fac_1"/>
    <property type="match status" value="1"/>
</dbReference>
<dbReference type="InterPro" id="IPR005139">
    <property type="entry name" value="PCRF"/>
</dbReference>
<dbReference type="InterPro" id="IPR000352">
    <property type="entry name" value="Pep_chain_release_fac_I"/>
</dbReference>
<dbReference type="InterPro" id="IPR045853">
    <property type="entry name" value="Pep_chain_release_fac_I_sf"/>
</dbReference>
<dbReference type="InterPro" id="IPR050057">
    <property type="entry name" value="Prokaryotic/Mito_RF"/>
</dbReference>
<dbReference type="InterPro" id="IPR004373">
    <property type="entry name" value="RF-1"/>
</dbReference>
<dbReference type="NCBIfam" id="TIGR00019">
    <property type="entry name" value="prfA"/>
    <property type="match status" value="1"/>
</dbReference>
<dbReference type="NCBIfam" id="NF001859">
    <property type="entry name" value="PRK00591.1"/>
    <property type="match status" value="1"/>
</dbReference>
<dbReference type="PANTHER" id="PTHR43804">
    <property type="entry name" value="LD18447P"/>
    <property type="match status" value="1"/>
</dbReference>
<dbReference type="PANTHER" id="PTHR43804:SF7">
    <property type="entry name" value="LD18447P"/>
    <property type="match status" value="1"/>
</dbReference>
<dbReference type="Pfam" id="PF03462">
    <property type="entry name" value="PCRF"/>
    <property type="match status" value="1"/>
</dbReference>
<dbReference type="Pfam" id="PF00472">
    <property type="entry name" value="RF-1"/>
    <property type="match status" value="1"/>
</dbReference>
<dbReference type="SMART" id="SM00937">
    <property type="entry name" value="PCRF"/>
    <property type="match status" value="1"/>
</dbReference>
<dbReference type="SUPFAM" id="SSF75620">
    <property type="entry name" value="Release factor"/>
    <property type="match status" value="1"/>
</dbReference>
<dbReference type="PROSITE" id="PS00745">
    <property type="entry name" value="RF_PROK_I"/>
    <property type="match status" value="1"/>
</dbReference>
<keyword id="KW-0963">Cytoplasm</keyword>
<keyword id="KW-0488">Methylation</keyword>
<keyword id="KW-0648">Protein biosynthesis</keyword>
<keyword id="KW-1185">Reference proteome</keyword>
<name>RF1_MYCA9</name>
<proteinExistence type="inferred from homology"/>
<sequence>MSETPLIDAMLAEHAELEKQLADPALHADAAAARKAGRRFAMLSPIVATHRKLATARDDLATARELSADDPSFADEVTELESSIAELETQLSDMLAPRDPHDGDDILLEVKSGEGGEESALFAADLARMYIRYAERHGWKVTVLDETESDLGGYKDATLAIASKGDSADGVWSRLKFEGGVHRVQRVPVTESQGRVHTSAAGVLVYPEPEEVEEIQIDESDLRIDVYRSSGKGGQGVNTTDSAVRITHLPTGIVVTCQNERSQLQNKARAMQVLAARLQALAEEQAQADASAGRASQIRTVDRSERIRTYNFPENRITDHRVGFKAHNLDQVLDGDLDALFDALAAADRKARLQEA</sequence>
<gene>
    <name evidence="1" type="primary">prfA</name>
    <name type="ordered locus">MAB_1442</name>
</gene>
<protein>
    <recommendedName>
        <fullName evidence="1">Peptide chain release factor 1</fullName>
        <shortName evidence="1">RF-1</shortName>
    </recommendedName>
</protein>
<comment type="function">
    <text evidence="1">Peptide chain release factor 1 directs the termination of translation in response to the peptide chain termination codons UAG and UAA.</text>
</comment>
<comment type="subcellular location">
    <subcellularLocation>
        <location evidence="1">Cytoplasm</location>
    </subcellularLocation>
</comment>
<comment type="PTM">
    <text evidence="1">Methylated by PrmC. Methylation increases the termination efficiency of RF1.</text>
</comment>
<comment type="similarity">
    <text evidence="1">Belongs to the prokaryotic/mitochondrial release factor family.</text>
</comment>
<reference key="1">
    <citation type="journal article" date="2009" name="PLoS ONE">
        <title>Non mycobacterial virulence genes in the genome of the emerging pathogen Mycobacterium abscessus.</title>
        <authorList>
            <person name="Ripoll F."/>
            <person name="Pasek S."/>
            <person name="Schenowitz C."/>
            <person name="Dossat C."/>
            <person name="Barbe V."/>
            <person name="Rottman M."/>
            <person name="Macheras E."/>
            <person name="Heym B."/>
            <person name="Herrmann J.L."/>
            <person name="Daffe M."/>
            <person name="Brosch R."/>
            <person name="Risler J.L."/>
            <person name="Gaillard J.L."/>
        </authorList>
    </citation>
    <scope>NUCLEOTIDE SEQUENCE [LARGE SCALE GENOMIC DNA]</scope>
    <source>
        <strain>ATCC 19977 / DSM 44196 / CCUG 20993 / CIP 104536 / JCM 13569 / NCTC 13031 / TMC 1543 / L948</strain>
    </source>
</reference>